<gene>
    <name type="primary">bgt</name>
</gene>
<sequence>MKIAIINMGNNVINFKTVPSSETIYLFKVISEMGLNVDIISLKNGVYTKSFDEVDVNDYDRLIVVNSSINFFGGKPNLAILSAQKFMAKYKSKIYYLFTDIRLPFSQSWPNVKNRPWAYLYTEEELLIKSPIKVISQGINLDIAKAAHKKVDNVIEFEYFPIEQYKIHMNDFQLSKPTKKTLDVIYGGSFRSGQRESKMVEFLFDTGLNIEFFGNAREKQFKNPKYPWTKAPVFTGKIPMNMVSEKNSQAIAALIIGDKNYNDNFITLRVWETMASDAVMLIDEEFDTKHRIINDARFYVNNRAELIDRVNELKHSDVLRKEMLSIQHDILNKTRAKKAEWQDAFKKAIDL</sequence>
<accession>P04547</accession>
<accession>Q38417</accession>
<protein>
    <recommendedName>
        <fullName>DNA beta-glucosyltransferase</fullName>
        <shortName>BGT</shortName>
        <shortName>Beta-GT</shortName>
        <ecNumber evidence="3">2.4.1.27</ecNumber>
    </recommendedName>
</protein>
<reference key="1">
    <citation type="journal article" date="1985" name="Nucleic Acids Res.">
        <title>T4-induced alpha- and beta-glucosyltransferase: cloning of the genes and a comparison of their products based on sequencing data.</title>
        <authorList>
            <person name="Tomaschewski J."/>
            <person name="Gram H."/>
            <person name="Crabb J.W."/>
            <person name="Rueger W."/>
        </authorList>
    </citation>
    <scope>NUCLEOTIDE SEQUENCE [GENOMIC DNA]</scope>
</reference>
<reference key="2">
    <citation type="journal article" date="2003" name="Microbiol. Mol. Biol. Rev.">
        <title>Bacteriophage T4 genome.</title>
        <authorList>
            <person name="Miller E.S."/>
            <person name="Kutter E."/>
            <person name="Mosig G."/>
            <person name="Arisaka F."/>
            <person name="Kunisawa T."/>
            <person name="Ruger W."/>
        </authorList>
    </citation>
    <scope>NUCLEOTIDE SEQUENCE [LARGE SCALE GENOMIC DNA]</scope>
</reference>
<reference key="3">
    <citation type="journal article" date="1988" name="J. Bacteriol.">
        <title>Expression and DNA sequence of the cloned bacteriophage T4 dCMP hydroxymethylase gene.</title>
        <authorList>
            <person name="Thylen C."/>
        </authorList>
    </citation>
    <scope>NUCLEOTIDE SEQUENCE [GENOMIC DNA] OF 1-88</scope>
</reference>
<reference key="4">
    <citation type="journal article" date="1987" name="Nucleic Acids Res.">
        <title>Nucleotide sequence of the deoxycytidylate hydroxymethylase gene of bacteriophage T4 (g42) and the homology of its gene product with thymidylate synthase of E. coli.</title>
        <authorList>
            <person name="Lamm N."/>
            <person name="Tomaschewski J."/>
            <person name="Rueger W."/>
        </authorList>
    </citation>
    <scope>NUCLEOTIDE SEQUENCE [GENOMIC DNA] OF 1-10</scope>
</reference>
<reference key="5">
    <citation type="journal article" date="1992" name="Proc. Natl. Acad. Sci. U.S.A.">
        <title>Identification of a family of bacteriophage T4 genes encoding proteins similar to those present in group I introns of fungi and phage.</title>
        <authorList>
            <person name="Sharma M."/>
            <person name="Ellis R.L."/>
            <person name="Hinton D.M."/>
        </authorList>
    </citation>
    <scope>NUCLEOTIDE SEQUENCE [GENOMIC DNA] OF 239-351</scope>
</reference>
<reference key="6">
    <citation type="journal article" date="1967" name="Eur. J. Biochem.">
        <title>On the specificity of bacteriophage-induced hydroxymethylcytosine glucosyltransferases. II. Specificities of hydroxymethylcytosine alphaand beta-glucosyltransferases induced by bacteriophage T4.</title>
        <authorList>
            <person name="de Waard A."/>
            <person name="Ubbink T.E."/>
            <person name="Beukman W."/>
        </authorList>
    </citation>
    <scope>CATALYTIC ACTIVITY</scope>
</reference>
<reference key="7">
    <citation type="journal article" date="2012" name="Biochemistry">
        <title>Biochemical characterization of recombinant beta-glucosyltransferase and analysis of global 5-hydroxymethylcytosine in unique genomes.</title>
        <authorList>
            <person name="Terragni J."/>
            <person name="Bitinaite J."/>
            <person name="Zheng Y."/>
            <person name="Pradhan S."/>
        </authorList>
    </citation>
    <scope>FUNCTION</scope>
</reference>
<reference key="8">
    <citation type="journal article" date="2015" name="MBio">
        <title>Covalent Modification of Bacteriophage T4 DNA Inhibits CRISPR-Cas9.</title>
        <authorList>
            <person name="Bryson A.L."/>
            <person name="Hwang Y."/>
            <person name="Sherrill-Mix S."/>
            <person name="Wu G.D."/>
            <person name="Lewis J.D."/>
            <person name="Black L."/>
            <person name="Clark T.A."/>
            <person name="Bushman F.D."/>
        </authorList>
    </citation>
    <scope>FUNCTION</scope>
</reference>
<reference key="9">
    <citation type="journal article" date="1994" name="EMBO J.">
        <title>Crystal structure of the DNA modifying enzyme beta-glucosyltransferase in the presence and absence of the substrate uridine diphosphoglucose.</title>
        <authorList>
            <person name="Vrelink A."/>
            <person name="Rueger W."/>
            <person name="Driessen H.P.C."/>
            <person name="Freemont P.S."/>
        </authorList>
    </citation>
    <scope>X-RAY CRYSTALLOGRAPHY (2.2 ANGSTROMS)</scope>
</reference>
<reference key="10">
    <citation type="journal article" date="1999" name="J. Mol. Biol.">
        <title>T4 phage beta-glucosyltransferase: substrate binding and proposed catalytic mechanism.</title>
        <authorList>
            <person name="Morera S."/>
            <person name="Imberty A."/>
            <person name="Aschke-Sonnenborn U."/>
            <person name="Ruger W."/>
            <person name="Freemont P.S."/>
        </authorList>
    </citation>
    <scope>X-RAY CRYSTALLOGRAPHY (2.3 ANGSTROMS)</scope>
</reference>
<name>GSTB_BPT4</name>
<dbReference type="EC" id="2.4.1.27" evidence="3"/>
<dbReference type="EMBL" id="X03139">
    <property type="protein sequence ID" value="CAA26908.1"/>
    <property type="molecule type" value="Genomic_DNA"/>
</dbReference>
<dbReference type="EMBL" id="AF158101">
    <property type="protein sequence ID" value="AAD42545.1"/>
    <property type="molecule type" value="Genomic_DNA"/>
</dbReference>
<dbReference type="EMBL" id="AH003347">
    <property type="protein sequence ID" value="AAA88469.1"/>
    <property type="molecule type" value="Genomic_DNA"/>
</dbReference>
<dbReference type="EMBL" id="M69268">
    <property type="protein sequence ID" value="AAA32544.1"/>
    <property type="molecule type" value="Genomic_DNA"/>
</dbReference>
<dbReference type="EMBL" id="Y00148">
    <property type="protein sequence ID" value="CAA68343.1"/>
    <property type="molecule type" value="Genomic_DNA"/>
</dbReference>
<dbReference type="PIR" id="A00576">
    <property type="entry name" value="XUBPB4"/>
</dbReference>
<dbReference type="PDB" id="1BGT">
    <property type="method" value="X-ray"/>
    <property type="resolution" value="2.20 A"/>
    <property type="chains" value="A=1-351"/>
</dbReference>
<dbReference type="PDB" id="1BGU">
    <property type="method" value="X-ray"/>
    <property type="resolution" value="2.20 A"/>
    <property type="chains" value="A=1-351"/>
</dbReference>
<dbReference type="PDB" id="1C3J">
    <property type="method" value="X-ray"/>
    <property type="resolution" value="1.88 A"/>
    <property type="chains" value="A=1-351"/>
</dbReference>
<dbReference type="PDB" id="1IXY">
    <property type="method" value="X-ray"/>
    <property type="resolution" value="2.50 A"/>
    <property type="chains" value="A/B=1-351"/>
</dbReference>
<dbReference type="PDB" id="1J39">
    <property type="method" value="X-ray"/>
    <property type="resolution" value="1.87 A"/>
    <property type="chains" value="A=1-351"/>
</dbReference>
<dbReference type="PDB" id="1JEJ">
    <property type="method" value="X-ray"/>
    <property type="resolution" value="2.50 A"/>
    <property type="chains" value="A=1-351"/>
</dbReference>
<dbReference type="PDB" id="1JG6">
    <property type="method" value="X-ray"/>
    <property type="resolution" value="1.90 A"/>
    <property type="chains" value="A=1-351"/>
</dbReference>
<dbReference type="PDB" id="1JG7">
    <property type="method" value="X-ray"/>
    <property type="resolution" value="1.65 A"/>
    <property type="chains" value="A=1-351"/>
</dbReference>
<dbReference type="PDB" id="1JIU">
    <property type="method" value="X-ray"/>
    <property type="resolution" value="2.50 A"/>
    <property type="chains" value="A=1-351"/>
</dbReference>
<dbReference type="PDB" id="1JIV">
    <property type="method" value="X-ray"/>
    <property type="resolution" value="2.07 A"/>
    <property type="chains" value="A=1-351"/>
</dbReference>
<dbReference type="PDB" id="1JIX">
    <property type="method" value="X-ray"/>
    <property type="resolution" value="1.65 A"/>
    <property type="chains" value="A=1-351"/>
</dbReference>
<dbReference type="PDB" id="1M5R">
    <property type="method" value="X-ray"/>
    <property type="resolution" value="1.80 A"/>
    <property type="chains" value="A/B=1-351"/>
</dbReference>
<dbReference type="PDB" id="1NVK">
    <property type="method" value="X-ray"/>
    <property type="resolution" value="1.80 A"/>
    <property type="chains" value="A=1-351"/>
</dbReference>
<dbReference type="PDB" id="1NZD">
    <property type="method" value="X-ray"/>
    <property type="resolution" value="2.00 A"/>
    <property type="chains" value="A=1-351"/>
</dbReference>
<dbReference type="PDB" id="1NZF">
    <property type="method" value="X-ray"/>
    <property type="resolution" value="2.10 A"/>
    <property type="chains" value="A=1-351"/>
</dbReference>
<dbReference type="PDB" id="1QKJ">
    <property type="method" value="X-ray"/>
    <property type="resolution" value="2.30 A"/>
    <property type="chains" value="A=1-351"/>
</dbReference>
<dbReference type="PDB" id="1SXP">
    <property type="method" value="X-ray"/>
    <property type="resolution" value="2.50 A"/>
    <property type="chains" value="A/B=1-351"/>
</dbReference>
<dbReference type="PDB" id="1SXQ">
    <property type="method" value="X-ray"/>
    <property type="resolution" value="1.80 A"/>
    <property type="chains" value="A/B=1-351"/>
</dbReference>
<dbReference type="PDB" id="2BGT">
    <property type="method" value="X-ray"/>
    <property type="resolution" value="2.20 A"/>
    <property type="chains" value="A=1-351"/>
</dbReference>
<dbReference type="PDB" id="2BGU">
    <property type="method" value="X-ray"/>
    <property type="resolution" value="2.20 A"/>
    <property type="chains" value="A=1-351"/>
</dbReference>
<dbReference type="PDBsum" id="1BGT"/>
<dbReference type="PDBsum" id="1BGU"/>
<dbReference type="PDBsum" id="1C3J"/>
<dbReference type="PDBsum" id="1IXY"/>
<dbReference type="PDBsum" id="1J39"/>
<dbReference type="PDBsum" id="1JEJ"/>
<dbReference type="PDBsum" id="1JG6"/>
<dbReference type="PDBsum" id="1JG7"/>
<dbReference type="PDBsum" id="1JIU"/>
<dbReference type="PDBsum" id="1JIV"/>
<dbReference type="PDBsum" id="1JIX"/>
<dbReference type="PDBsum" id="1M5R"/>
<dbReference type="PDBsum" id="1NVK"/>
<dbReference type="PDBsum" id="1NZD"/>
<dbReference type="PDBsum" id="1NZF"/>
<dbReference type="PDBsum" id="1QKJ"/>
<dbReference type="PDBsum" id="1SXP"/>
<dbReference type="PDBsum" id="1SXQ"/>
<dbReference type="PDBsum" id="2BGT"/>
<dbReference type="PDBsum" id="2BGU"/>
<dbReference type="SMR" id="P04547"/>
<dbReference type="DrugBank" id="DB01861">
    <property type="generic name" value="Uridine diphosphate glucose"/>
</dbReference>
<dbReference type="DrugBank" id="DB03435">
    <property type="generic name" value="Uridine-5'-Diphosphate"/>
</dbReference>
<dbReference type="CAZy" id="GT63">
    <property type="family name" value="Glycosyltransferase Family 63"/>
</dbReference>
<dbReference type="KEGG" id="vg:1258765"/>
<dbReference type="OrthoDB" id="4125at10239"/>
<dbReference type="BRENDA" id="2.4.1.27">
    <property type="organism ID" value="732"/>
</dbReference>
<dbReference type="UniPathway" id="UPA00198"/>
<dbReference type="EvolutionaryTrace" id="P04547"/>
<dbReference type="Proteomes" id="UP000009087">
    <property type="component" value="Segment"/>
</dbReference>
<dbReference type="GO" id="GO:0033821">
    <property type="term" value="F:DNA beta-glucosyltransferase activity"/>
    <property type="evidence" value="ECO:0000314"/>
    <property type="project" value="UniProtKB"/>
</dbReference>
<dbReference type="GO" id="GO:0006304">
    <property type="term" value="P:DNA modification"/>
    <property type="evidence" value="ECO:0007669"/>
    <property type="project" value="UniProtKB-UniPathway"/>
</dbReference>
<dbReference type="GO" id="GO:0099018">
    <property type="term" value="P:symbiont-mediated evasion of host restriction-modification system"/>
    <property type="evidence" value="ECO:0007669"/>
    <property type="project" value="UniProtKB-KW"/>
</dbReference>
<dbReference type="GO" id="GO:0052170">
    <property type="term" value="P:symbiont-mediated suppression of host innate immune response"/>
    <property type="evidence" value="ECO:0007669"/>
    <property type="project" value="UniProtKB-KW"/>
</dbReference>
<dbReference type="Gene3D" id="3.40.50.2000">
    <property type="entry name" value="Glycogen Phosphorylase B"/>
    <property type="match status" value="2"/>
</dbReference>
<dbReference type="InterPro" id="IPR015281">
    <property type="entry name" value="Phage_Bgt"/>
</dbReference>
<dbReference type="Pfam" id="PF09198">
    <property type="entry name" value="T4-Gluco-transf"/>
    <property type="match status" value="1"/>
</dbReference>
<dbReference type="SUPFAM" id="SSF53756">
    <property type="entry name" value="UDP-Glycosyltransferase/glycogen phosphorylase"/>
    <property type="match status" value="1"/>
</dbReference>
<evidence type="ECO:0000269" key="1">
    <source>
    </source>
</evidence>
<evidence type="ECO:0000269" key="2">
    <source>
    </source>
</evidence>
<evidence type="ECO:0000269" key="3">
    <source>
    </source>
</evidence>
<evidence type="ECO:0000305" key="4"/>
<evidence type="ECO:0007829" key="5">
    <source>
        <dbReference type="PDB" id="1JG7"/>
    </source>
</evidence>
<evidence type="ECO:0007829" key="6">
    <source>
        <dbReference type="PDB" id="1JIX"/>
    </source>
</evidence>
<evidence type="ECO:0007829" key="7">
    <source>
        <dbReference type="PDB" id="1SXP"/>
    </source>
</evidence>
<proteinExistence type="evidence at protein level"/>
<organism>
    <name type="scientific">Enterobacteria phage T4</name>
    <name type="common">Bacteriophage T4</name>
    <dbReference type="NCBI Taxonomy" id="10665"/>
    <lineage>
        <taxon>Viruses</taxon>
        <taxon>Duplodnaviria</taxon>
        <taxon>Heunggongvirae</taxon>
        <taxon>Uroviricota</taxon>
        <taxon>Caudoviricetes</taxon>
        <taxon>Straboviridae</taxon>
        <taxon>Tevenvirinae</taxon>
        <taxon>Tequatrovirus</taxon>
    </lineage>
</organism>
<feature type="chain" id="PRO_0000164942" description="DNA beta-glucosyltransferase">
    <location>
        <begin position="1"/>
        <end position="351"/>
    </location>
</feature>
<feature type="sequence conflict" description="In Ref. 3; AAA88469." evidence="4" ref="3">
    <original>KFMA</original>
    <variation>NLWQ</variation>
    <location>
        <begin position="85"/>
        <end position="88"/>
    </location>
</feature>
<feature type="strand" evidence="5">
    <location>
        <begin position="3"/>
        <end position="10"/>
    </location>
</feature>
<feature type="strand" evidence="5">
    <location>
        <begin position="14"/>
        <end position="17"/>
    </location>
</feature>
<feature type="helix" evidence="5">
    <location>
        <begin position="18"/>
        <end position="32"/>
    </location>
</feature>
<feature type="strand" evidence="5">
    <location>
        <begin position="37"/>
        <end position="43"/>
    </location>
</feature>
<feature type="strand" evidence="5">
    <location>
        <begin position="46"/>
        <end position="50"/>
    </location>
</feature>
<feature type="helix" evidence="5">
    <location>
        <begin position="51"/>
        <end position="53"/>
    </location>
</feature>
<feature type="helix" evidence="5">
    <location>
        <begin position="56"/>
        <end position="58"/>
    </location>
</feature>
<feature type="strand" evidence="5">
    <location>
        <begin position="60"/>
        <end position="65"/>
    </location>
</feature>
<feature type="strand" evidence="6">
    <location>
        <begin position="73"/>
        <end position="75"/>
    </location>
</feature>
<feature type="helix" evidence="5">
    <location>
        <begin position="78"/>
        <end position="89"/>
    </location>
</feature>
<feature type="strand" evidence="5">
    <location>
        <begin position="94"/>
        <end position="98"/>
    </location>
</feature>
<feature type="helix" evidence="5">
    <location>
        <begin position="109"/>
        <end position="112"/>
    </location>
</feature>
<feature type="helix" evidence="5">
    <location>
        <begin position="118"/>
        <end position="120"/>
    </location>
</feature>
<feature type="helix" evidence="5">
    <location>
        <begin position="123"/>
        <end position="126"/>
    </location>
</feature>
<feature type="strand" evidence="5">
    <location>
        <begin position="132"/>
        <end position="137"/>
    </location>
</feature>
<feature type="helix" evidence="5">
    <location>
        <begin position="142"/>
        <end position="147"/>
    </location>
</feature>
<feature type="turn" evidence="5">
    <location>
        <begin position="148"/>
        <end position="150"/>
    </location>
</feature>
<feature type="strand" evidence="5">
    <location>
        <begin position="152"/>
        <end position="159"/>
    </location>
</feature>
<feature type="helix" evidence="5">
    <location>
        <begin position="162"/>
        <end position="164"/>
    </location>
</feature>
<feature type="helix" evidence="5">
    <location>
        <begin position="165"/>
        <end position="168"/>
    </location>
</feature>
<feature type="strand" evidence="7">
    <location>
        <begin position="169"/>
        <end position="171"/>
    </location>
</feature>
<feature type="strand" evidence="5">
    <location>
        <begin position="182"/>
        <end position="187"/>
    </location>
</feature>
<feature type="helix" evidence="5">
    <location>
        <begin position="191"/>
        <end position="193"/>
    </location>
</feature>
<feature type="helix" evidence="5">
    <location>
        <begin position="196"/>
        <end position="203"/>
    </location>
</feature>
<feature type="strand" evidence="5">
    <location>
        <begin position="210"/>
        <end position="215"/>
    </location>
</feature>
<feature type="helix" evidence="5">
    <location>
        <begin position="218"/>
        <end position="220"/>
    </location>
</feature>
<feature type="strand" evidence="6">
    <location>
        <begin position="233"/>
        <end position="235"/>
    </location>
</feature>
<feature type="helix" evidence="5">
    <location>
        <begin position="240"/>
        <end position="242"/>
    </location>
</feature>
<feature type="helix" evidence="5">
    <location>
        <begin position="243"/>
        <end position="247"/>
    </location>
</feature>
<feature type="strand" evidence="5">
    <location>
        <begin position="250"/>
        <end position="255"/>
    </location>
</feature>
<feature type="helix" evidence="5">
    <location>
        <begin position="259"/>
        <end position="261"/>
    </location>
</feature>
<feature type="turn" evidence="5">
    <location>
        <begin position="262"/>
        <end position="264"/>
    </location>
</feature>
<feature type="helix" evidence="5">
    <location>
        <begin position="268"/>
        <end position="274"/>
    </location>
</feature>
<feature type="strand" evidence="5">
    <location>
        <begin position="276"/>
        <end position="283"/>
    </location>
</feature>
<feature type="helix" evidence="5">
    <location>
        <begin position="284"/>
        <end position="286"/>
    </location>
</feature>
<feature type="helix" evidence="5">
    <location>
        <begin position="296"/>
        <end position="298"/>
    </location>
</feature>
<feature type="strand" evidence="6">
    <location>
        <begin position="299"/>
        <end position="302"/>
    </location>
</feature>
<feature type="helix" evidence="5">
    <location>
        <begin position="303"/>
        <end position="315"/>
    </location>
</feature>
<feature type="helix" evidence="5">
    <location>
        <begin position="317"/>
        <end position="335"/>
    </location>
</feature>
<feature type="helix" evidence="5">
    <location>
        <begin position="338"/>
        <end position="348"/>
    </location>
</feature>
<comment type="function">
    <text evidence="1 2">Catalyzes the transfer of glucose from uridine diphosphoglucose to 5-hydroxymethyl cytosine of T4 DNA to yield glucosyl 5-hydroxymethyl cytosine (glc-HMC) (PubMed:22229759). This DNA process seems to occur immediately after DNA synthesis since the DNA alpha-glucosyltransferase interacts with the clamp protein gp45 (PubMed:22229759). The glc-HMC modification protects the phage genome against its own nucleases and the host restriction endonuclease system (PubMed:22229759). The glc-HMC modification also protects against the host CRISPR-Cas9 defense system (PubMed:26081634).</text>
</comment>
<comment type="catalytic activity">
    <reaction evidence="3">
        <text>Transfers a beta-D-glucosyl residue from UDP-alpha-D-glucose to a hydroxymethylcytosine residue in DNA.</text>
        <dbReference type="EC" id="2.4.1.27"/>
    </reaction>
</comment>
<comment type="pathway">
    <text>Genetic information processing; DNA modification.</text>
</comment>
<comment type="subunit">
    <text>Monomer.</text>
</comment>
<organismHost>
    <name type="scientific">Escherichia coli</name>
    <dbReference type="NCBI Taxonomy" id="562"/>
</organismHost>
<keyword id="KW-0002">3D-structure</keyword>
<keyword id="KW-0328">Glycosyltransferase</keyword>
<keyword id="KW-0945">Host-virus interaction</keyword>
<keyword id="KW-1090">Inhibition of host innate immune response by virus</keyword>
<keyword id="KW-1185">Reference proteome</keyword>
<keyword id="KW-1258">Restriction-modification system evasion by virus</keyword>
<keyword id="KW-0808">Transferase</keyword>
<keyword id="KW-0899">Viral immunoevasion</keyword>